<protein>
    <recommendedName>
        <fullName evidence="1">tRNA modification GTPase MnmE</fullName>
        <ecNumber evidence="1">3.6.-.-</ecNumber>
    </recommendedName>
</protein>
<reference key="1">
    <citation type="journal article" date="2006" name="Proc. Natl. Acad. Sci. U.S.A.">
        <title>Molecular genetic anatomy of inter- and intraserotype variation in the human bacterial pathogen group A Streptococcus.</title>
        <authorList>
            <person name="Beres S.B."/>
            <person name="Richter E.W."/>
            <person name="Nagiec M.J."/>
            <person name="Sumby P."/>
            <person name="Porcella S.F."/>
            <person name="DeLeo F.R."/>
            <person name="Musser J.M."/>
        </authorList>
    </citation>
    <scope>NUCLEOTIDE SEQUENCE [LARGE SCALE GENOMIC DNA]</scope>
    <source>
        <strain>MGAS10750</strain>
    </source>
</reference>
<proteinExistence type="inferred from homology"/>
<dbReference type="EC" id="3.6.-.-" evidence="1"/>
<dbReference type="EMBL" id="CP000262">
    <property type="protein sequence ID" value="ABF37892.1"/>
    <property type="molecule type" value="Genomic_DNA"/>
</dbReference>
<dbReference type="SMR" id="Q1J6U1"/>
<dbReference type="KEGG" id="spi:MGAS10750_Spy0942"/>
<dbReference type="HOGENOM" id="CLU_019624_4_1_9"/>
<dbReference type="Proteomes" id="UP000002434">
    <property type="component" value="Chromosome"/>
</dbReference>
<dbReference type="GO" id="GO:0005829">
    <property type="term" value="C:cytosol"/>
    <property type="evidence" value="ECO:0007669"/>
    <property type="project" value="TreeGrafter"/>
</dbReference>
<dbReference type="GO" id="GO:0005525">
    <property type="term" value="F:GTP binding"/>
    <property type="evidence" value="ECO:0007669"/>
    <property type="project" value="UniProtKB-UniRule"/>
</dbReference>
<dbReference type="GO" id="GO:0003924">
    <property type="term" value="F:GTPase activity"/>
    <property type="evidence" value="ECO:0007669"/>
    <property type="project" value="UniProtKB-UniRule"/>
</dbReference>
<dbReference type="GO" id="GO:0046872">
    <property type="term" value="F:metal ion binding"/>
    <property type="evidence" value="ECO:0007669"/>
    <property type="project" value="UniProtKB-KW"/>
</dbReference>
<dbReference type="GO" id="GO:0030488">
    <property type="term" value="P:tRNA methylation"/>
    <property type="evidence" value="ECO:0007669"/>
    <property type="project" value="TreeGrafter"/>
</dbReference>
<dbReference type="GO" id="GO:0002098">
    <property type="term" value="P:tRNA wobble uridine modification"/>
    <property type="evidence" value="ECO:0007669"/>
    <property type="project" value="TreeGrafter"/>
</dbReference>
<dbReference type="CDD" id="cd04164">
    <property type="entry name" value="trmE"/>
    <property type="match status" value="1"/>
</dbReference>
<dbReference type="CDD" id="cd14858">
    <property type="entry name" value="TrmE_N"/>
    <property type="match status" value="1"/>
</dbReference>
<dbReference type="FunFam" id="3.30.1360.120:FF:000003">
    <property type="entry name" value="tRNA modification GTPase MnmE"/>
    <property type="match status" value="1"/>
</dbReference>
<dbReference type="FunFam" id="3.40.50.300:FF:000494">
    <property type="entry name" value="tRNA modification GTPase MnmE"/>
    <property type="match status" value="1"/>
</dbReference>
<dbReference type="Gene3D" id="3.40.50.300">
    <property type="entry name" value="P-loop containing nucleotide triphosphate hydrolases"/>
    <property type="match status" value="1"/>
</dbReference>
<dbReference type="Gene3D" id="3.30.1360.120">
    <property type="entry name" value="Probable tRNA modification gtpase trme, domain 1"/>
    <property type="match status" value="1"/>
</dbReference>
<dbReference type="Gene3D" id="1.20.120.430">
    <property type="entry name" value="tRNA modification GTPase MnmE domain 2"/>
    <property type="match status" value="1"/>
</dbReference>
<dbReference type="HAMAP" id="MF_00379">
    <property type="entry name" value="GTPase_MnmE"/>
    <property type="match status" value="1"/>
</dbReference>
<dbReference type="InterPro" id="IPR031168">
    <property type="entry name" value="G_TrmE"/>
</dbReference>
<dbReference type="InterPro" id="IPR006073">
    <property type="entry name" value="GTP-bd"/>
</dbReference>
<dbReference type="InterPro" id="IPR018948">
    <property type="entry name" value="GTP-bd_TrmE_N"/>
</dbReference>
<dbReference type="InterPro" id="IPR004520">
    <property type="entry name" value="GTPase_MnmE"/>
</dbReference>
<dbReference type="InterPro" id="IPR027368">
    <property type="entry name" value="MnmE_dom2"/>
</dbReference>
<dbReference type="InterPro" id="IPR025867">
    <property type="entry name" value="MnmE_helical"/>
</dbReference>
<dbReference type="InterPro" id="IPR027417">
    <property type="entry name" value="P-loop_NTPase"/>
</dbReference>
<dbReference type="InterPro" id="IPR005225">
    <property type="entry name" value="Small_GTP-bd"/>
</dbReference>
<dbReference type="InterPro" id="IPR027266">
    <property type="entry name" value="TrmE/GcvT_dom1"/>
</dbReference>
<dbReference type="NCBIfam" id="TIGR00450">
    <property type="entry name" value="mnmE_trmE_thdF"/>
    <property type="match status" value="1"/>
</dbReference>
<dbReference type="NCBIfam" id="NF003661">
    <property type="entry name" value="PRK05291.1-3"/>
    <property type="match status" value="1"/>
</dbReference>
<dbReference type="NCBIfam" id="TIGR00231">
    <property type="entry name" value="small_GTP"/>
    <property type="match status" value="1"/>
</dbReference>
<dbReference type="PANTHER" id="PTHR42714">
    <property type="entry name" value="TRNA MODIFICATION GTPASE GTPBP3"/>
    <property type="match status" value="1"/>
</dbReference>
<dbReference type="PANTHER" id="PTHR42714:SF2">
    <property type="entry name" value="TRNA MODIFICATION GTPASE GTPBP3, MITOCHONDRIAL"/>
    <property type="match status" value="1"/>
</dbReference>
<dbReference type="Pfam" id="PF01926">
    <property type="entry name" value="MMR_HSR1"/>
    <property type="match status" value="1"/>
</dbReference>
<dbReference type="Pfam" id="PF12631">
    <property type="entry name" value="MnmE_helical"/>
    <property type="match status" value="1"/>
</dbReference>
<dbReference type="Pfam" id="PF10396">
    <property type="entry name" value="TrmE_N"/>
    <property type="match status" value="1"/>
</dbReference>
<dbReference type="SUPFAM" id="SSF52540">
    <property type="entry name" value="P-loop containing nucleoside triphosphate hydrolases"/>
    <property type="match status" value="1"/>
</dbReference>
<dbReference type="SUPFAM" id="SSF116878">
    <property type="entry name" value="TrmE connector domain"/>
    <property type="match status" value="1"/>
</dbReference>
<dbReference type="PROSITE" id="PS51709">
    <property type="entry name" value="G_TRME"/>
    <property type="match status" value="1"/>
</dbReference>
<evidence type="ECO:0000255" key="1">
    <source>
        <dbReference type="HAMAP-Rule" id="MF_00379"/>
    </source>
</evidence>
<keyword id="KW-0963">Cytoplasm</keyword>
<keyword id="KW-0342">GTP-binding</keyword>
<keyword id="KW-0378">Hydrolase</keyword>
<keyword id="KW-0460">Magnesium</keyword>
<keyword id="KW-0479">Metal-binding</keyword>
<keyword id="KW-0547">Nucleotide-binding</keyword>
<keyword id="KW-0630">Potassium</keyword>
<keyword id="KW-0819">tRNA processing</keyword>
<gene>
    <name evidence="1" type="primary">mnmE</name>
    <name evidence="1" type="synonym">trmE</name>
    <name type="ordered locus">MGAS10750_Spy0942</name>
</gene>
<name>MNME_STRPF</name>
<comment type="function">
    <text evidence="1">Exhibits a very high intrinsic GTPase hydrolysis rate. Involved in the addition of a carboxymethylaminomethyl (cmnm) group at the wobble position (U34) of certain tRNAs, forming tRNA-cmnm(5)s(2)U34.</text>
</comment>
<comment type="cofactor">
    <cofactor evidence="1">
        <name>K(+)</name>
        <dbReference type="ChEBI" id="CHEBI:29103"/>
    </cofactor>
    <text evidence="1">Binds 1 potassium ion per subunit.</text>
</comment>
<comment type="subunit">
    <text evidence="1">Homodimer. Heterotetramer of two MnmE and two MnmG subunits.</text>
</comment>
<comment type="subcellular location">
    <subcellularLocation>
        <location evidence="1">Cytoplasm</location>
    </subcellularLocation>
</comment>
<comment type="similarity">
    <text evidence="1">Belongs to the TRAFAC class TrmE-Era-EngA-EngB-Septin-like GTPase superfamily. TrmE GTPase family.</text>
</comment>
<organism>
    <name type="scientific">Streptococcus pyogenes serotype M4 (strain MGAS10750)</name>
    <dbReference type="NCBI Taxonomy" id="370554"/>
    <lineage>
        <taxon>Bacteria</taxon>
        <taxon>Bacillati</taxon>
        <taxon>Bacillota</taxon>
        <taxon>Bacilli</taxon>
        <taxon>Lactobacillales</taxon>
        <taxon>Streptococcaceae</taxon>
        <taxon>Streptococcus</taxon>
    </lineage>
</organism>
<sequence length="458" mass="50405">MSITKEFDTITAISTPLGEGAIGIVRLSGTDALAIAQSVFKGKNLEQVASHTINYGHIIDPNTGTIVDEVMVSVMLAPKTFTRENVVEINTHGGIAVTNEILQLLIRQGARMAEPGEFTKRAFLNGRVDLTQAEAVMDIIRAKTDKAMTIAVKQLDGSLSQLINDTRQEILNTLAQVEVNIDYPEYDDVEEMTTALLREKTQEFQSLLENLLRTAKRGKILREGLSTAIIGRPNVGKSSLLNNLLREDKAIVTDIAGTTRDVIEEYVNIKGVPLKLVDTAGIRETDDLVEQIGVERSKKALQEADLVLLVLNASEKLTDQDRALLNLSQDSNRIILLNKTDLEQKIELEQLPADLISISVLTNQNINLIEDRINQLFFDNAGLVEQDATYLSNARHISLIEKAVQSLEAVNDGLALGMPVDLLQVDLTRTWEILGEITGDAAPDELITQLFSQFCLGK</sequence>
<feature type="chain" id="PRO_1000048889" description="tRNA modification GTPase MnmE">
    <location>
        <begin position="1"/>
        <end position="458"/>
    </location>
</feature>
<feature type="domain" description="TrmE-type G">
    <location>
        <begin position="224"/>
        <end position="378"/>
    </location>
</feature>
<feature type="binding site" evidence="1">
    <location>
        <position position="26"/>
    </location>
    <ligand>
        <name>(6S)-5-formyl-5,6,7,8-tetrahydrofolate</name>
        <dbReference type="ChEBI" id="CHEBI:57457"/>
    </ligand>
</feature>
<feature type="binding site" evidence="1">
    <location>
        <position position="88"/>
    </location>
    <ligand>
        <name>(6S)-5-formyl-5,6,7,8-tetrahydrofolate</name>
        <dbReference type="ChEBI" id="CHEBI:57457"/>
    </ligand>
</feature>
<feature type="binding site" evidence="1">
    <location>
        <position position="127"/>
    </location>
    <ligand>
        <name>(6S)-5-formyl-5,6,7,8-tetrahydrofolate</name>
        <dbReference type="ChEBI" id="CHEBI:57457"/>
    </ligand>
</feature>
<feature type="binding site" evidence="1">
    <location>
        <begin position="234"/>
        <end position="239"/>
    </location>
    <ligand>
        <name>GTP</name>
        <dbReference type="ChEBI" id="CHEBI:37565"/>
    </ligand>
</feature>
<feature type="binding site" evidence="1">
    <location>
        <position position="234"/>
    </location>
    <ligand>
        <name>K(+)</name>
        <dbReference type="ChEBI" id="CHEBI:29103"/>
    </ligand>
</feature>
<feature type="binding site" evidence="1">
    <location>
        <position position="238"/>
    </location>
    <ligand>
        <name>Mg(2+)</name>
        <dbReference type="ChEBI" id="CHEBI:18420"/>
    </ligand>
</feature>
<feature type="binding site" evidence="1">
    <location>
        <begin position="253"/>
        <end position="259"/>
    </location>
    <ligand>
        <name>GTP</name>
        <dbReference type="ChEBI" id="CHEBI:37565"/>
    </ligand>
</feature>
<feature type="binding site" evidence="1">
    <location>
        <position position="253"/>
    </location>
    <ligand>
        <name>K(+)</name>
        <dbReference type="ChEBI" id="CHEBI:29103"/>
    </ligand>
</feature>
<feature type="binding site" evidence="1">
    <location>
        <position position="255"/>
    </location>
    <ligand>
        <name>K(+)</name>
        <dbReference type="ChEBI" id="CHEBI:29103"/>
    </ligand>
</feature>
<feature type="binding site" evidence="1">
    <location>
        <position position="258"/>
    </location>
    <ligand>
        <name>K(+)</name>
        <dbReference type="ChEBI" id="CHEBI:29103"/>
    </ligand>
</feature>
<feature type="binding site" evidence="1">
    <location>
        <position position="259"/>
    </location>
    <ligand>
        <name>Mg(2+)</name>
        <dbReference type="ChEBI" id="CHEBI:18420"/>
    </ligand>
</feature>
<feature type="binding site" evidence="1">
    <location>
        <begin position="278"/>
        <end position="281"/>
    </location>
    <ligand>
        <name>GTP</name>
        <dbReference type="ChEBI" id="CHEBI:37565"/>
    </ligand>
</feature>
<feature type="binding site" evidence="1">
    <location>
        <position position="458"/>
    </location>
    <ligand>
        <name>(6S)-5-formyl-5,6,7,8-tetrahydrofolate</name>
        <dbReference type="ChEBI" id="CHEBI:57457"/>
    </ligand>
</feature>
<accession>Q1J6U1</accession>